<reference key="1">
    <citation type="journal article" date="2005" name="Nucleic Acids Res.">
        <title>The genome sequence of Salmonella enterica serovar Choleraesuis, a highly invasive and resistant zoonotic pathogen.</title>
        <authorList>
            <person name="Chiu C.-H."/>
            <person name="Tang P."/>
            <person name="Chu C."/>
            <person name="Hu S."/>
            <person name="Bao Q."/>
            <person name="Yu J."/>
            <person name="Chou Y.-Y."/>
            <person name="Wang H.-S."/>
            <person name="Lee Y.-S."/>
        </authorList>
    </citation>
    <scope>NUCLEOTIDE SEQUENCE [LARGE SCALE GENOMIC DNA]</scope>
    <source>
        <strain>SC-B67</strain>
    </source>
</reference>
<comment type="function">
    <text evidence="2">Participates actively in the response to hyperosmotic and heat shock by preventing the aggregation of stress-denatured proteins and by disaggregating proteins, also in an autonomous, DnaK-independent fashion. Unfolded proteins bind initially to DnaJ; upon interaction with the DnaJ-bound protein, DnaK hydrolyzes its bound ATP, resulting in the formation of a stable complex. GrpE releases ADP from DnaK; ATP binding to DnaK triggers the release of the substrate protein, thus completing the reaction cycle. Several rounds of ATP-dependent interactions between DnaJ, DnaK and GrpE are required for fully efficient folding. Also involved, together with DnaK and GrpE, in the DNA replication of plasmids through activation of initiation proteins.</text>
</comment>
<comment type="cofactor">
    <cofactor evidence="2">
        <name>Zn(2+)</name>
        <dbReference type="ChEBI" id="CHEBI:29105"/>
    </cofactor>
    <text evidence="2">Binds 2 Zn(2+) ions per monomer.</text>
</comment>
<comment type="subunit">
    <text evidence="2">Homodimer.</text>
</comment>
<comment type="subcellular location">
    <subcellularLocation>
        <location evidence="2">Cytoplasm</location>
    </subcellularLocation>
</comment>
<comment type="domain">
    <text evidence="2">The J domain is necessary and sufficient to stimulate DnaK ATPase activity. Zinc center 1 plays an important role in the autonomous, DnaK-independent chaperone activity of DnaJ. Zinc center 2 is essential for interaction with DnaK and for DnaJ activity.</text>
</comment>
<comment type="similarity">
    <text evidence="2">Belongs to the DnaJ family.</text>
</comment>
<evidence type="ECO:0000250" key="1"/>
<evidence type="ECO:0000255" key="2">
    <source>
        <dbReference type="HAMAP-Rule" id="MF_01152"/>
    </source>
</evidence>
<sequence>MAKRDYYEILGVSKTAEEREIKKAYKRLAMKYHPDRNQGDKEAEAKFKEIKEAYEVLTDAQKRAAYDQYGHAAFEQGGMGGGFGGGFNGGADFSDIFGDVFGDIFGGGRGRQRAARGADLRYNMDLTLEEAVRGVTKEIRIPTLEECDVCHGSGAKAGTQPQTCPTCHGSGQVQMRQGFFAVQQTCPHCQGRGTLIKDPCHKCHGHGRVEKSKTLSVKIPAGVDTGDRIRLAGEGEAGEHGAPAGDLYVQVQVKQHPIFEREGNNLYCEVPINFAMAALGGEIEVPTLDGRVMLKVPSETQTGKLFRMRGKGVKSVRGGAQGDLLCRVVVETPVGLSEKQKQLLKDLQESFGGPTGEKNSPRSKSFFDGVKKFFDDLTR</sequence>
<protein>
    <recommendedName>
        <fullName evidence="2">Chaperone protein DnaJ</fullName>
    </recommendedName>
</protein>
<name>DNAJ_SALCH</name>
<feature type="initiator methionine" description="Removed" evidence="1">
    <location>
        <position position="1"/>
    </location>
</feature>
<feature type="chain" id="PRO_0000070875" description="Chaperone protein DnaJ">
    <location>
        <begin position="2"/>
        <end position="379"/>
    </location>
</feature>
<feature type="domain" description="J" evidence="2">
    <location>
        <begin position="5"/>
        <end position="70"/>
    </location>
</feature>
<feature type="repeat" description="CXXCXGXG motif">
    <location>
        <begin position="147"/>
        <end position="154"/>
    </location>
</feature>
<feature type="repeat" description="CXXCXGXG motif">
    <location>
        <begin position="164"/>
        <end position="171"/>
    </location>
</feature>
<feature type="repeat" description="CXXCXGXG motif">
    <location>
        <begin position="186"/>
        <end position="193"/>
    </location>
</feature>
<feature type="repeat" description="CXXCXGXG motif">
    <location>
        <begin position="200"/>
        <end position="207"/>
    </location>
</feature>
<feature type="zinc finger region" description="CR-type" evidence="2">
    <location>
        <begin position="134"/>
        <end position="212"/>
    </location>
</feature>
<feature type="binding site" evidence="2">
    <location>
        <position position="147"/>
    </location>
    <ligand>
        <name>Zn(2+)</name>
        <dbReference type="ChEBI" id="CHEBI:29105"/>
        <label>1</label>
    </ligand>
</feature>
<feature type="binding site" evidence="2">
    <location>
        <position position="150"/>
    </location>
    <ligand>
        <name>Zn(2+)</name>
        <dbReference type="ChEBI" id="CHEBI:29105"/>
        <label>1</label>
    </ligand>
</feature>
<feature type="binding site" evidence="2">
    <location>
        <position position="164"/>
    </location>
    <ligand>
        <name>Zn(2+)</name>
        <dbReference type="ChEBI" id="CHEBI:29105"/>
        <label>2</label>
    </ligand>
</feature>
<feature type="binding site" evidence="2">
    <location>
        <position position="167"/>
    </location>
    <ligand>
        <name>Zn(2+)</name>
        <dbReference type="ChEBI" id="CHEBI:29105"/>
        <label>2</label>
    </ligand>
</feature>
<feature type="binding site" evidence="2">
    <location>
        <position position="186"/>
    </location>
    <ligand>
        <name>Zn(2+)</name>
        <dbReference type="ChEBI" id="CHEBI:29105"/>
        <label>2</label>
    </ligand>
</feature>
<feature type="binding site" evidence="2">
    <location>
        <position position="189"/>
    </location>
    <ligand>
        <name>Zn(2+)</name>
        <dbReference type="ChEBI" id="CHEBI:29105"/>
        <label>2</label>
    </ligand>
</feature>
<feature type="binding site" evidence="2">
    <location>
        <position position="200"/>
    </location>
    <ligand>
        <name>Zn(2+)</name>
        <dbReference type="ChEBI" id="CHEBI:29105"/>
        <label>1</label>
    </ligand>
</feature>
<feature type="binding site" evidence="2">
    <location>
        <position position="203"/>
    </location>
    <ligand>
        <name>Zn(2+)</name>
        <dbReference type="ChEBI" id="CHEBI:29105"/>
        <label>1</label>
    </ligand>
</feature>
<proteinExistence type="inferred from homology"/>
<gene>
    <name evidence="2" type="primary">dnaJ</name>
    <name type="ordered locus">SCH_0013</name>
</gene>
<dbReference type="EMBL" id="AE017220">
    <property type="protein sequence ID" value="AAX63919.1"/>
    <property type="molecule type" value="Genomic_DNA"/>
</dbReference>
<dbReference type="RefSeq" id="WP_001119009.1">
    <property type="nucleotide sequence ID" value="NC_006905.1"/>
</dbReference>
<dbReference type="SMR" id="Q57TP2"/>
<dbReference type="KEGG" id="sec:SCH_0013"/>
<dbReference type="HOGENOM" id="CLU_017633_0_7_6"/>
<dbReference type="Proteomes" id="UP000000538">
    <property type="component" value="Chromosome"/>
</dbReference>
<dbReference type="GO" id="GO:0005737">
    <property type="term" value="C:cytoplasm"/>
    <property type="evidence" value="ECO:0007669"/>
    <property type="project" value="UniProtKB-SubCell"/>
</dbReference>
<dbReference type="GO" id="GO:0005524">
    <property type="term" value="F:ATP binding"/>
    <property type="evidence" value="ECO:0007669"/>
    <property type="project" value="InterPro"/>
</dbReference>
<dbReference type="GO" id="GO:0031072">
    <property type="term" value="F:heat shock protein binding"/>
    <property type="evidence" value="ECO:0007669"/>
    <property type="project" value="InterPro"/>
</dbReference>
<dbReference type="GO" id="GO:0051082">
    <property type="term" value="F:unfolded protein binding"/>
    <property type="evidence" value="ECO:0007669"/>
    <property type="project" value="UniProtKB-UniRule"/>
</dbReference>
<dbReference type="GO" id="GO:0008270">
    <property type="term" value="F:zinc ion binding"/>
    <property type="evidence" value="ECO:0007669"/>
    <property type="project" value="UniProtKB-UniRule"/>
</dbReference>
<dbReference type="GO" id="GO:0051085">
    <property type="term" value="P:chaperone cofactor-dependent protein refolding"/>
    <property type="evidence" value="ECO:0007669"/>
    <property type="project" value="TreeGrafter"/>
</dbReference>
<dbReference type="GO" id="GO:0006260">
    <property type="term" value="P:DNA replication"/>
    <property type="evidence" value="ECO:0007669"/>
    <property type="project" value="UniProtKB-KW"/>
</dbReference>
<dbReference type="GO" id="GO:0042026">
    <property type="term" value="P:protein refolding"/>
    <property type="evidence" value="ECO:0007669"/>
    <property type="project" value="TreeGrafter"/>
</dbReference>
<dbReference type="GO" id="GO:0009408">
    <property type="term" value="P:response to heat"/>
    <property type="evidence" value="ECO:0007669"/>
    <property type="project" value="InterPro"/>
</dbReference>
<dbReference type="CDD" id="cd06257">
    <property type="entry name" value="DnaJ"/>
    <property type="match status" value="1"/>
</dbReference>
<dbReference type="CDD" id="cd10747">
    <property type="entry name" value="DnaJ_C"/>
    <property type="match status" value="1"/>
</dbReference>
<dbReference type="CDD" id="cd10719">
    <property type="entry name" value="DnaJ_zf"/>
    <property type="match status" value="1"/>
</dbReference>
<dbReference type="FunFam" id="1.10.287.110:FF:000003">
    <property type="entry name" value="Molecular chaperone DnaJ"/>
    <property type="match status" value="1"/>
</dbReference>
<dbReference type="FunFam" id="2.10.230.10:FF:000002">
    <property type="entry name" value="Molecular chaperone DnaJ"/>
    <property type="match status" value="1"/>
</dbReference>
<dbReference type="FunFam" id="2.60.260.20:FF:000004">
    <property type="entry name" value="Molecular chaperone DnaJ"/>
    <property type="match status" value="1"/>
</dbReference>
<dbReference type="Gene3D" id="1.10.287.110">
    <property type="entry name" value="DnaJ domain"/>
    <property type="match status" value="1"/>
</dbReference>
<dbReference type="Gene3D" id="2.10.230.10">
    <property type="entry name" value="Heat shock protein DnaJ, cysteine-rich domain"/>
    <property type="match status" value="1"/>
</dbReference>
<dbReference type="Gene3D" id="2.60.260.20">
    <property type="entry name" value="Urease metallochaperone UreE, N-terminal domain"/>
    <property type="match status" value="2"/>
</dbReference>
<dbReference type="HAMAP" id="MF_01152">
    <property type="entry name" value="DnaJ"/>
    <property type="match status" value="1"/>
</dbReference>
<dbReference type="InterPro" id="IPR012724">
    <property type="entry name" value="DnaJ"/>
</dbReference>
<dbReference type="InterPro" id="IPR002939">
    <property type="entry name" value="DnaJ_C"/>
</dbReference>
<dbReference type="InterPro" id="IPR001623">
    <property type="entry name" value="DnaJ_domain"/>
</dbReference>
<dbReference type="InterPro" id="IPR018253">
    <property type="entry name" value="DnaJ_domain_CS"/>
</dbReference>
<dbReference type="InterPro" id="IPR008971">
    <property type="entry name" value="HSP40/DnaJ_pept-bd"/>
</dbReference>
<dbReference type="InterPro" id="IPR001305">
    <property type="entry name" value="HSP_DnaJ_Cys-rich_dom"/>
</dbReference>
<dbReference type="InterPro" id="IPR036410">
    <property type="entry name" value="HSP_DnaJ_Cys-rich_dom_sf"/>
</dbReference>
<dbReference type="InterPro" id="IPR036869">
    <property type="entry name" value="J_dom_sf"/>
</dbReference>
<dbReference type="NCBIfam" id="TIGR02349">
    <property type="entry name" value="DnaJ_bact"/>
    <property type="match status" value="1"/>
</dbReference>
<dbReference type="NCBIfam" id="NF008035">
    <property type="entry name" value="PRK10767.1"/>
    <property type="match status" value="1"/>
</dbReference>
<dbReference type="PANTHER" id="PTHR43096:SF48">
    <property type="entry name" value="CHAPERONE PROTEIN DNAJ"/>
    <property type="match status" value="1"/>
</dbReference>
<dbReference type="PANTHER" id="PTHR43096">
    <property type="entry name" value="DNAJ HOMOLOG 1, MITOCHONDRIAL-RELATED"/>
    <property type="match status" value="1"/>
</dbReference>
<dbReference type="Pfam" id="PF00226">
    <property type="entry name" value="DnaJ"/>
    <property type="match status" value="1"/>
</dbReference>
<dbReference type="Pfam" id="PF01556">
    <property type="entry name" value="DnaJ_C"/>
    <property type="match status" value="1"/>
</dbReference>
<dbReference type="Pfam" id="PF00684">
    <property type="entry name" value="DnaJ_CXXCXGXG"/>
    <property type="match status" value="1"/>
</dbReference>
<dbReference type="PRINTS" id="PR00625">
    <property type="entry name" value="JDOMAIN"/>
</dbReference>
<dbReference type="SMART" id="SM00271">
    <property type="entry name" value="DnaJ"/>
    <property type="match status" value="1"/>
</dbReference>
<dbReference type="SUPFAM" id="SSF46565">
    <property type="entry name" value="Chaperone J-domain"/>
    <property type="match status" value="1"/>
</dbReference>
<dbReference type="SUPFAM" id="SSF57938">
    <property type="entry name" value="DnaJ/Hsp40 cysteine-rich domain"/>
    <property type="match status" value="1"/>
</dbReference>
<dbReference type="SUPFAM" id="SSF49493">
    <property type="entry name" value="HSP40/DnaJ peptide-binding domain"/>
    <property type="match status" value="2"/>
</dbReference>
<dbReference type="PROSITE" id="PS00636">
    <property type="entry name" value="DNAJ_1"/>
    <property type="match status" value="1"/>
</dbReference>
<dbReference type="PROSITE" id="PS50076">
    <property type="entry name" value="DNAJ_2"/>
    <property type="match status" value="1"/>
</dbReference>
<dbReference type="PROSITE" id="PS51188">
    <property type="entry name" value="ZF_CR"/>
    <property type="match status" value="1"/>
</dbReference>
<organism>
    <name type="scientific">Salmonella choleraesuis (strain SC-B67)</name>
    <dbReference type="NCBI Taxonomy" id="321314"/>
    <lineage>
        <taxon>Bacteria</taxon>
        <taxon>Pseudomonadati</taxon>
        <taxon>Pseudomonadota</taxon>
        <taxon>Gammaproteobacteria</taxon>
        <taxon>Enterobacterales</taxon>
        <taxon>Enterobacteriaceae</taxon>
        <taxon>Salmonella</taxon>
    </lineage>
</organism>
<accession>Q57TP2</accession>
<keyword id="KW-0143">Chaperone</keyword>
<keyword id="KW-0963">Cytoplasm</keyword>
<keyword id="KW-0235">DNA replication</keyword>
<keyword id="KW-0479">Metal-binding</keyword>
<keyword id="KW-0677">Repeat</keyword>
<keyword id="KW-0346">Stress response</keyword>
<keyword id="KW-0862">Zinc</keyword>
<keyword id="KW-0863">Zinc-finger</keyword>